<gene>
    <name type="primary">LDHAL6A</name>
    <name type="synonym">LDHL2</name>
</gene>
<reference key="1">
    <citation type="journal article" date="2009" name="Mol. Biol. Rep.">
        <title>Identification of a novel human lactate dehydrogenase gene LDHAL6A, which activates transcriptional activities of AP1(PMA).</title>
        <authorList>
            <person name="Chen X."/>
            <person name="Gu X."/>
            <person name="Shan Y."/>
            <person name="Tang W."/>
            <person name="Yuan J."/>
            <person name="Zhong Z."/>
            <person name="Wang Y."/>
            <person name="Huang W."/>
            <person name="Wan B."/>
            <person name="Yu L."/>
        </authorList>
    </citation>
    <scope>NUCLEOTIDE SEQUENCE [MRNA]</scope>
    <scope>FUNCTION</scope>
    <scope>SUBCELLULAR LOCATION</scope>
    <scope>TISSUE SPECIFICITY</scope>
    <scope>CATALYTIC ACTIVITY</scope>
</reference>
<reference key="2">
    <citation type="journal article" date="2004" name="Nat. Genet.">
        <title>Complete sequencing and characterization of 21,243 full-length human cDNAs.</title>
        <authorList>
            <person name="Ota T."/>
            <person name="Suzuki Y."/>
            <person name="Nishikawa T."/>
            <person name="Otsuki T."/>
            <person name="Sugiyama T."/>
            <person name="Irie R."/>
            <person name="Wakamatsu A."/>
            <person name="Hayashi K."/>
            <person name="Sato H."/>
            <person name="Nagai K."/>
            <person name="Kimura K."/>
            <person name="Makita H."/>
            <person name="Sekine M."/>
            <person name="Obayashi M."/>
            <person name="Nishi T."/>
            <person name="Shibahara T."/>
            <person name="Tanaka T."/>
            <person name="Ishii S."/>
            <person name="Yamamoto J."/>
            <person name="Saito K."/>
            <person name="Kawai Y."/>
            <person name="Isono Y."/>
            <person name="Nakamura Y."/>
            <person name="Nagahari K."/>
            <person name="Murakami K."/>
            <person name="Yasuda T."/>
            <person name="Iwayanagi T."/>
            <person name="Wagatsuma M."/>
            <person name="Shiratori A."/>
            <person name="Sudo H."/>
            <person name="Hosoiri T."/>
            <person name="Kaku Y."/>
            <person name="Kodaira H."/>
            <person name="Kondo H."/>
            <person name="Sugawara M."/>
            <person name="Takahashi M."/>
            <person name="Kanda K."/>
            <person name="Yokoi T."/>
            <person name="Furuya T."/>
            <person name="Kikkawa E."/>
            <person name="Omura Y."/>
            <person name="Abe K."/>
            <person name="Kamihara K."/>
            <person name="Katsuta N."/>
            <person name="Sato K."/>
            <person name="Tanikawa M."/>
            <person name="Yamazaki M."/>
            <person name="Ninomiya K."/>
            <person name="Ishibashi T."/>
            <person name="Yamashita H."/>
            <person name="Murakawa K."/>
            <person name="Fujimori K."/>
            <person name="Tanai H."/>
            <person name="Kimata M."/>
            <person name="Watanabe M."/>
            <person name="Hiraoka S."/>
            <person name="Chiba Y."/>
            <person name="Ishida S."/>
            <person name="Ono Y."/>
            <person name="Takiguchi S."/>
            <person name="Watanabe S."/>
            <person name="Yosida M."/>
            <person name="Hotuta T."/>
            <person name="Kusano J."/>
            <person name="Kanehori K."/>
            <person name="Takahashi-Fujii A."/>
            <person name="Hara H."/>
            <person name="Tanase T.-O."/>
            <person name="Nomura Y."/>
            <person name="Togiya S."/>
            <person name="Komai F."/>
            <person name="Hara R."/>
            <person name="Takeuchi K."/>
            <person name="Arita M."/>
            <person name="Imose N."/>
            <person name="Musashino K."/>
            <person name="Yuuki H."/>
            <person name="Oshima A."/>
            <person name="Sasaki N."/>
            <person name="Aotsuka S."/>
            <person name="Yoshikawa Y."/>
            <person name="Matsunawa H."/>
            <person name="Ichihara T."/>
            <person name="Shiohata N."/>
            <person name="Sano S."/>
            <person name="Moriya S."/>
            <person name="Momiyama H."/>
            <person name="Satoh N."/>
            <person name="Takami S."/>
            <person name="Terashima Y."/>
            <person name="Suzuki O."/>
            <person name="Nakagawa S."/>
            <person name="Senoh A."/>
            <person name="Mizoguchi H."/>
            <person name="Goto Y."/>
            <person name="Shimizu F."/>
            <person name="Wakebe H."/>
            <person name="Hishigaki H."/>
            <person name="Watanabe T."/>
            <person name="Sugiyama A."/>
            <person name="Takemoto M."/>
            <person name="Kawakami B."/>
            <person name="Yamazaki M."/>
            <person name="Watanabe K."/>
            <person name="Kumagai A."/>
            <person name="Itakura S."/>
            <person name="Fukuzumi Y."/>
            <person name="Fujimori Y."/>
            <person name="Komiyama M."/>
            <person name="Tashiro H."/>
            <person name="Tanigami A."/>
            <person name="Fujiwara T."/>
            <person name="Ono T."/>
            <person name="Yamada K."/>
            <person name="Fujii Y."/>
            <person name="Ozaki K."/>
            <person name="Hirao M."/>
            <person name="Ohmori Y."/>
            <person name="Kawabata A."/>
            <person name="Hikiji T."/>
            <person name="Kobatake N."/>
            <person name="Inagaki H."/>
            <person name="Ikema Y."/>
            <person name="Okamoto S."/>
            <person name="Okitani R."/>
            <person name="Kawakami T."/>
            <person name="Noguchi S."/>
            <person name="Itoh T."/>
            <person name="Shigeta K."/>
            <person name="Senba T."/>
            <person name="Matsumura K."/>
            <person name="Nakajima Y."/>
            <person name="Mizuno T."/>
            <person name="Morinaga M."/>
            <person name="Sasaki M."/>
            <person name="Togashi T."/>
            <person name="Oyama M."/>
            <person name="Hata H."/>
            <person name="Watanabe M."/>
            <person name="Komatsu T."/>
            <person name="Mizushima-Sugano J."/>
            <person name="Satoh T."/>
            <person name="Shirai Y."/>
            <person name="Takahashi Y."/>
            <person name="Nakagawa K."/>
            <person name="Okumura K."/>
            <person name="Nagase T."/>
            <person name="Nomura N."/>
            <person name="Kikuchi H."/>
            <person name="Masuho Y."/>
            <person name="Yamashita R."/>
            <person name="Nakai K."/>
            <person name="Yada T."/>
            <person name="Nakamura Y."/>
            <person name="Ohara O."/>
            <person name="Isogai T."/>
            <person name="Sugano S."/>
        </authorList>
    </citation>
    <scope>NUCLEOTIDE SEQUENCE [LARGE SCALE MRNA]</scope>
    <source>
        <tissue>Brain</tissue>
    </source>
</reference>
<reference key="3">
    <citation type="submission" date="2005-09" db="EMBL/GenBank/DDBJ databases">
        <authorList>
            <person name="Mural R.J."/>
            <person name="Istrail S."/>
            <person name="Sutton G.G."/>
            <person name="Florea L."/>
            <person name="Halpern A.L."/>
            <person name="Mobarry C.M."/>
            <person name="Lippert R."/>
            <person name="Walenz B."/>
            <person name="Shatkay H."/>
            <person name="Dew I."/>
            <person name="Miller J.R."/>
            <person name="Flanigan M.J."/>
            <person name="Edwards N.J."/>
            <person name="Bolanos R."/>
            <person name="Fasulo D."/>
            <person name="Halldorsson B.V."/>
            <person name="Hannenhalli S."/>
            <person name="Turner R."/>
            <person name="Yooseph S."/>
            <person name="Lu F."/>
            <person name="Nusskern D.R."/>
            <person name="Shue B.C."/>
            <person name="Zheng X.H."/>
            <person name="Zhong F."/>
            <person name="Delcher A.L."/>
            <person name="Huson D.H."/>
            <person name="Kravitz S.A."/>
            <person name="Mouchard L."/>
            <person name="Reinert K."/>
            <person name="Remington K.A."/>
            <person name="Clark A.G."/>
            <person name="Waterman M.S."/>
            <person name="Eichler E.E."/>
            <person name="Adams M.D."/>
            <person name="Hunkapiller M.W."/>
            <person name="Myers E.W."/>
            <person name="Venter J.C."/>
        </authorList>
    </citation>
    <scope>NUCLEOTIDE SEQUENCE [LARGE SCALE GENOMIC DNA]</scope>
</reference>
<feature type="initiator methionine" description="Removed" evidence="2">
    <location>
        <position position="1"/>
    </location>
</feature>
<feature type="chain" id="PRO_0000168457" description="L-lactate dehydrogenase A-like 6A">
    <location>
        <begin position="2"/>
        <end position="332"/>
    </location>
</feature>
<feature type="active site" description="Proton acceptor" evidence="1">
    <location>
        <position position="193"/>
    </location>
</feature>
<feature type="binding site" evidence="2">
    <location>
        <begin position="29"/>
        <end position="57"/>
    </location>
    <ligand>
        <name>NAD(+)</name>
        <dbReference type="ChEBI" id="CHEBI:57540"/>
    </ligand>
</feature>
<feature type="binding site" evidence="2">
    <location>
        <position position="99"/>
    </location>
    <ligand>
        <name>NAD(+)</name>
        <dbReference type="ChEBI" id="CHEBI:57540"/>
    </ligand>
</feature>
<feature type="binding site" evidence="1">
    <location>
        <position position="106"/>
    </location>
    <ligand>
        <name>substrate</name>
    </ligand>
</feature>
<feature type="binding site" evidence="2">
    <location>
        <position position="138"/>
    </location>
    <ligand>
        <name>NAD(+)</name>
        <dbReference type="ChEBI" id="CHEBI:57540"/>
    </ligand>
</feature>
<feature type="binding site" evidence="1">
    <location>
        <position position="138"/>
    </location>
    <ligand>
        <name>substrate</name>
    </ligand>
</feature>
<feature type="binding site" evidence="1">
    <location>
        <position position="169"/>
    </location>
    <ligand>
        <name>substrate</name>
    </ligand>
</feature>
<feature type="binding site" evidence="1">
    <location>
        <position position="248"/>
    </location>
    <ligand>
        <name>substrate</name>
    </ligand>
</feature>
<feature type="modified residue" description="N-acetylalanine" evidence="2">
    <location>
        <position position="2"/>
    </location>
</feature>
<feature type="modified residue" description="N6-acetyllysine; alternate" evidence="2">
    <location>
        <position position="5"/>
    </location>
</feature>
<feature type="modified residue" description="N6-succinyllysine; alternate" evidence="4">
    <location>
        <position position="5"/>
    </location>
</feature>
<feature type="modified residue" description="N6-acetyllysine; alternate" evidence="2">
    <location>
        <position position="57"/>
    </location>
</feature>
<feature type="modified residue" description="N6-acetyllysine" evidence="2">
    <location>
        <position position="81"/>
    </location>
</feature>
<feature type="modified residue" description="N6-acetyllysine; alternate" evidence="2">
    <location>
        <position position="118"/>
    </location>
</feature>
<feature type="modified residue" description="N6-succinyllysine; alternate" evidence="4">
    <location>
        <position position="118"/>
    </location>
</feature>
<feature type="modified residue" description="N6-acetyllysine" evidence="4">
    <location>
        <position position="232"/>
    </location>
</feature>
<feature type="modified residue" description="Phosphotyrosine" evidence="4">
    <location>
        <position position="239"/>
    </location>
</feature>
<feature type="modified residue" description="N6-acetyllysine" evidence="4">
    <location>
        <position position="243"/>
    </location>
</feature>
<feature type="modified residue" description="Phosphothreonine" evidence="3">
    <location>
        <position position="309"/>
    </location>
</feature>
<feature type="modified residue" description="N6-acetyllysine; alternate" evidence="2">
    <location>
        <position position="318"/>
    </location>
</feature>
<feature type="modified residue" description="N6-succinyllysine; alternate" evidence="4">
    <location>
        <position position="318"/>
    </location>
</feature>
<feature type="modified residue" description="Phosphothreonine" evidence="3">
    <location>
        <position position="322"/>
    </location>
</feature>
<feature type="cross-link" description="Glycyl lysine isopeptide (Lys-Gly) (interchain with G-Cter in SUMO2); alternate" evidence="2">
    <location>
        <position position="57"/>
    </location>
</feature>
<evidence type="ECO:0000250" key="1"/>
<evidence type="ECO:0000250" key="2">
    <source>
        <dbReference type="UniProtKB" id="P00338"/>
    </source>
</evidence>
<evidence type="ECO:0000250" key="3">
    <source>
        <dbReference type="UniProtKB" id="P04642"/>
    </source>
</evidence>
<evidence type="ECO:0000250" key="4">
    <source>
        <dbReference type="UniProtKB" id="P06151"/>
    </source>
</evidence>
<evidence type="ECO:0000269" key="5">
    <source>
    </source>
</evidence>
<evidence type="ECO:0000305" key="6"/>
<evidence type="ECO:0000305" key="7">
    <source>
    </source>
</evidence>
<organism>
    <name type="scientific">Homo sapiens</name>
    <name type="common">Human</name>
    <dbReference type="NCBI Taxonomy" id="9606"/>
    <lineage>
        <taxon>Eukaryota</taxon>
        <taxon>Metazoa</taxon>
        <taxon>Chordata</taxon>
        <taxon>Craniata</taxon>
        <taxon>Vertebrata</taxon>
        <taxon>Euteleostomi</taxon>
        <taxon>Mammalia</taxon>
        <taxon>Eutheria</taxon>
        <taxon>Euarchontoglires</taxon>
        <taxon>Primates</taxon>
        <taxon>Haplorrhini</taxon>
        <taxon>Catarrhini</taxon>
        <taxon>Hominidae</taxon>
        <taxon>Homo</taxon>
    </lineage>
</organism>
<accession>Q6ZMR3</accession>
<accession>D3DQY5</accession>
<dbReference type="EC" id="1.1.1.27" evidence="5"/>
<dbReference type="EMBL" id="AY581313">
    <property type="protein sequence ID" value="AAS93432.1"/>
    <property type="molecule type" value="mRNA"/>
</dbReference>
<dbReference type="EMBL" id="AK131523">
    <property type="protein sequence ID" value="BAD18662.1"/>
    <property type="molecule type" value="mRNA"/>
</dbReference>
<dbReference type="EMBL" id="CH471064">
    <property type="protein sequence ID" value="EAW68387.1"/>
    <property type="molecule type" value="Genomic_DNA"/>
</dbReference>
<dbReference type="EMBL" id="CH471064">
    <property type="protein sequence ID" value="EAW68388.1"/>
    <property type="molecule type" value="Genomic_DNA"/>
</dbReference>
<dbReference type="CCDS" id="CCDS7841.1"/>
<dbReference type="RefSeq" id="NP_001137543.1">
    <property type="nucleotide sequence ID" value="NM_001144071.2"/>
</dbReference>
<dbReference type="RefSeq" id="NP_659409.2">
    <property type="nucleotide sequence ID" value="NM_144972.4"/>
</dbReference>
<dbReference type="SMR" id="Q6ZMR3"/>
<dbReference type="BioGRID" id="127750">
    <property type="interactions" value="42"/>
</dbReference>
<dbReference type="FunCoup" id="Q6ZMR3">
    <property type="interactions" value="460"/>
</dbReference>
<dbReference type="IntAct" id="Q6ZMR3">
    <property type="interactions" value="15"/>
</dbReference>
<dbReference type="STRING" id="9606.ENSP00000280706"/>
<dbReference type="DrugBank" id="DB00157">
    <property type="generic name" value="NADH"/>
</dbReference>
<dbReference type="iPTMnet" id="Q6ZMR3"/>
<dbReference type="PhosphoSitePlus" id="Q6ZMR3"/>
<dbReference type="SwissPalm" id="Q6ZMR3"/>
<dbReference type="BioMuta" id="LDHAL6A"/>
<dbReference type="DMDM" id="51316252"/>
<dbReference type="jPOST" id="Q6ZMR3"/>
<dbReference type="MassIVE" id="Q6ZMR3"/>
<dbReference type="PaxDb" id="9606-ENSP00000280706"/>
<dbReference type="PeptideAtlas" id="Q6ZMR3"/>
<dbReference type="ProteomicsDB" id="67905"/>
<dbReference type="Pumba" id="Q6ZMR3"/>
<dbReference type="Antibodypedia" id="25097">
    <property type="antibodies" value="116 antibodies from 22 providers"/>
</dbReference>
<dbReference type="DNASU" id="160287"/>
<dbReference type="Ensembl" id="ENST00000280706.3">
    <property type="protein sequence ID" value="ENSP00000280706.2"/>
    <property type="gene ID" value="ENSG00000166800.11"/>
</dbReference>
<dbReference type="Ensembl" id="ENST00000396213.7">
    <property type="protein sequence ID" value="ENSP00000379516.3"/>
    <property type="gene ID" value="ENSG00000166800.11"/>
</dbReference>
<dbReference type="GeneID" id="160287"/>
<dbReference type="KEGG" id="hsa:160287"/>
<dbReference type="MANE-Select" id="ENST00000280706.3">
    <property type="protein sequence ID" value="ENSP00000280706.2"/>
    <property type="RefSeq nucleotide sequence ID" value="NM_144972.5"/>
    <property type="RefSeq protein sequence ID" value="NP_659409.2"/>
</dbReference>
<dbReference type="UCSC" id="uc001mop.2">
    <property type="organism name" value="human"/>
</dbReference>
<dbReference type="AGR" id="HGNC:28335"/>
<dbReference type="CTD" id="160287"/>
<dbReference type="GeneCards" id="LDHAL6A"/>
<dbReference type="HGNC" id="HGNC:28335">
    <property type="gene designation" value="LDHAL6A"/>
</dbReference>
<dbReference type="HPA" id="ENSG00000166800">
    <property type="expression patterns" value="Tissue enriched (testis)"/>
</dbReference>
<dbReference type="MIM" id="618928">
    <property type="type" value="gene"/>
</dbReference>
<dbReference type="neXtProt" id="NX_Q6ZMR3"/>
<dbReference type="OpenTargets" id="ENSG00000166800"/>
<dbReference type="PharmGKB" id="PA134950539"/>
<dbReference type="VEuPathDB" id="HostDB:ENSG00000166800"/>
<dbReference type="eggNOG" id="KOG1495">
    <property type="taxonomic scope" value="Eukaryota"/>
</dbReference>
<dbReference type="GeneTree" id="ENSGT00940000164064"/>
<dbReference type="HOGENOM" id="CLU_045401_0_2_1"/>
<dbReference type="InParanoid" id="Q6ZMR3"/>
<dbReference type="OMA" id="TARFRFF"/>
<dbReference type="OrthoDB" id="5405561at2759"/>
<dbReference type="PAN-GO" id="Q6ZMR3">
    <property type="GO annotations" value="1 GO annotation based on evolutionary models"/>
</dbReference>
<dbReference type="PhylomeDB" id="Q6ZMR3"/>
<dbReference type="TreeFam" id="TF314963"/>
<dbReference type="PathwayCommons" id="Q6ZMR3"/>
<dbReference type="Reactome" id="R-HSA-70268">
    <property type="pathway name" value="Pyruvate metabolism"/>
</dbReference>
<dbReference type="SignaLink" id="Q6ZMR3"/>
<dbReference type="UniPathway" id="UPA00554">
    <property type="reaction ID" value="UER00611"/>
</dbReference>
<dbReference type="BioGRID-ORCS" id="160287">
    <property type="hits" value="11 hits in 1147 CRISPR screens"/>
</dbReference>
<dbReference type="ChiTaRS" id="LDHAL6A">
    <property type="organism name" value="human"/>
</dbReference>
<dbReference type="GenomeRNAi" id="160287"/>
<dbReference type="Pharos" id="Q6ZMR3">
    <property type="development level" value="Tbio"/>
</dbReference>
<dbReference type="PRO" id="PR:Q6ZMR3"/>
<dbReference type="Proteomes" id="UP000005640">
    <property type="component" value="Chromosome 11"/>
</dbReference>
<dbReference type="RNAct" id="Q6ZMR3">
    <property type="molecule type" value="protein"/>
</dbReference>
<dbReference type="Bgee" id="ENSG00000166800">
    <property type="expression patterns" value="Expressed in secondary oocyte and 98 other cell types or tissues"/>
</dbReference>
<dbReference type="ExpressionAtlas" id="Q6ZMR3">
    <property type="expression patterns" value="baseline and differential"/>
</dbReference>
<dbReference type="GO" id="GO:0005737">
    <property type="term" value="C:cytoplasm"/>
    <property type="evidence" value="ECO:0000314"/>
    <property type="project" value="UniProtKB"/>
</dbReference>
<dbReference type="GO" id="GO:0070062">
    <property type="term" value="C:extracellular exosome"/>
    <property type="evidence" value="ECO:0007005"/>
    <property type="project" value="UniProtKB"/>
</dbReference>
<dbReference type="GO" id="GO:0005739">
    <property type="term" value="C:mitochondrion"/>
    <property type="evidence" value="ECO:0000318"/>
    <property type="project" value="GO_Central"/>
</dbReference>
<dbReference type="GO" id="GO:0004459">
    <property type="term" value="F:L-lactate dehydrogenase activity"/>
    <property type="evidence" value="ECO:0000314"/>
    <property type="project" value="UniProtKB"/>
</dbReference>
<dbReference type="GO" id="GO:0006089">
    <property type="term" value="P:lactate metabolic process"/>
    <property type="evidence" value="ECO:0000318"/>
    <property type="project" value="GO_Central"/>
</dbReference>
<dbReference type="GO" id="GO:0006090">
    <property type="term" value="P:pyruvate metabolic process"/>
    <property type="evidence" value="ECO:0000318"/>
    <property type="project" value="GO_Central"/>
</dbReference>
<dbReference type="CDD" id="cd05293">
    <property type="entry name" value="LDH_1"/>
    <property type="match status" value="1"/>
</dbReference>
<dbReference type="FunFam" id="3.40.50.720:FF:000029">
    <property type="entry name" value="L-lactate dehydrogenase A chain"/>
    <property type="match status" value="1"/>
</dbReference>
<dbReference type="FunFam" id="3.90.110.10:FF:000003">
    <property type="entry name" value="L-lactate dehydrogenase A chain"/>
    <property type="match status" value="1"/>
</dbReference>
<dbReference type="Gene3D" id="3.90.110.10">
    <property type="entry name" value="Lactate dehydrogenase/glycoside hydrolase, family 4, C-terminal"/>
    <property type="match status" value="1"/>
</dbReference>
<dbReference type="Gene3D" id="3.40.50.720">
    <property type="entry name" value="NAD(P)-binding Rossmann-like Domain"/>
    <property type="match status" value="1"/>
</dbReference>
<dbReference type="HAMAP" id="MF_00488">
    <property type="entry name" value="Lactate_dehydrog"/>
    <property type="match status" value="1"/>
</dbReference>
<dbReference type="InterPro" id="IPR001557">
    <property type="entry name" value="L-lactate/malate_DH"/>
</dbReference>
<dbReference type="InterPro" id="IPR011304">
    <property type="entry name" value="L-lactate_DH"/>
</dbReference>
<dbReference type="InterPro" id="IPR018177">
    <property type="entry name" value="L-lactate_DH_AS"/>
</dbReference>
<dbReference type="InterPro" id="IPR022383">
    <property type="entry name" value="Lactate/malate_DH_C"/>
</dbReference>
<dbReference type="InterPro" id="IPR001236">
    <property type="entry name" value="Lactate/malate_DH_N"/>
</dbReference>
<dbReference type="InterPro" id="IPR015955">
    <property type="entry name" value="Lactate_DH/Glyco_Ohase_4_C"/>
</dbReference>
<dbReference type="InterPro" id="IPR036291">
    <property type="entry name" value="NAD(P)-bd_dom_sf"/>
</dbReference>
<dbReference type="NCBIfam" id="TIGR01771">
    <property type="entry name" value="L-LDH-NAD"/>
    <property type="match status" value="1"/>
</dbReference>
<dbReference type="NCBIfam" id="NF000824">
    <property type="entry name" value="PRK00066.1"/>
    <property type="match status" value="1"/>
</dbReference>
<dbReference type="NCBIfam" id="NF004863">
    <property type="entry name" value="PRK06223.1"/>
    <property type="match status" value="1"/>
</dbReference>
<dbReference type="PANTHER" id="PTHR43128">
    <property type="entry name" value="L-2-HYDROXYCARBOXYLATE DEHYDROGENASE (NAD(P)(+))"/>
    <property type="match status" value="1"/>
</dbReference>
<dbReference type="PANTHER" id="PTHR43128:SF9">
    <property type="entry name" value="L-LACTATE DEHYDROGENASE A-LIKE 6A"/>
    <property type="match status" value="1"/>
</dbReference>
<dbReference type="Pfam" id="PF02866">
    <property type="entry name" value="Ldh_1_C"/>
    <property type="match status" value="1"/>
</dbReference>
<dbReference type="Pfam" id="PF00056">
    <property type="entry name" value="Ldh_1_N"/>
    <property type="match status" value="1"/>
</dbReference>
<dbReference type="PIRSF" id="PIRSF000102">
    <property type="entry name" value="Lac_mal_DH"/>
    <property type="match status" value="1"/>
</dbReference>
<dbReference type="PRINTS" id="PR00086">
    <property type="entry name" value="LLDHDRGNASE"/>
</dbReference>
<dbReference type="SUPFAM" id="SSF56327">
    <property type="entry name" value="LDH C-terminal domain-like"/>
    <property type="match status" value="1"/>
</dbReference>
<dbReference type="SUPFAM" id="SSF51735">
    <property type="entry name" value="NAD(P)-binding Rossmann-fold domains"/>
    <property type="match status" value="1"/>
</dbReference>
<dbReference type="PROSITE" id="PS00064">
    <property type="entry name" value="L_LDH"/>
    <property type="match status" value="1"/>
</dbReference>
<comment type="function">
    <text evidence="5">Catalyzes the interconversion of L-lactate and pyruvate with nicotinamide adenine dinucleotide NAD(+) as a coenzyme (PubMed:18351441). Significantly increases the transcriptional activity of JUN, when overexpressed.</text>
</comment>
<comment type="catalytic activity">
    <reaction evidence="5">
        <text>(S)-lactate + NAD(+) = pyruvate + NADH + H(+)</text>
        <dbReference type="Rhea" id="RHEA:23444"/>
        <dbReference type="ChEBI" id="CHEBI:15361"/>
        <dbReference type="ChEBI" id="CHEBI:15378"/>
        <dbReference type="ChEBI" id="CHEBI:16651"/>
        <dbReference type="ChEBI" id="CHEBI:57540"/>
        <dbReference type="ChEBI" id="CHEBI:57945"/>
        <dbReference type="EC" id="1.1.1.27"/>
    </reaction>
    <physiologicalReaction direction="left-to-right" evidence="2">
        <dbReference type="Rhea" id="RHEA:23445"/>
    </physiologicalReaction>
    <physiologicalReaction direction="right-to-left" evidence="7">
        <dbReference type="Rhea" id="RHEA:23446"/>
    </physiologicalReaction>
</comment>
<comment type="pathway">
    <text>Fermentation; pyruvate fermentation to lactate; (S)-lactate from pyruvate: step 1/1.</text>
</comment>
<comment type="subcellular location">
    <subcellularLocation>
        <location evidence="5">Cytoplasm</location>
    </subcellularLocation>
</comment>
<comment type="tissue specificity">
    <text evidence="5">Testis-specific.</text>
</comment>
<comment type="similarity">
    <text evidence="6">Belongs to the LDH/MDH superfamily. LDH family.</text>
</comment>
<name>LDH6A_HUMAN</name>
<proteinExistence type="evidence at protein level"/>
<keyword id="KW-0007">Acetylation</keyword>
<keyword id="KW-0963">Cytoplasm</keyword>
<keyword id="KW-1017">Isopeptide bond</keyword>
<keyword id="KW-0520">NAD</keyword>
<keyword id="KW-0560">Oxidoreductase</keyword>
<keyword id="KW-0597">Phosphoprotein</keyword>
<keyword id="KW-1267">Proteomics identification</keyword>
<keyword id="KW-1185">Reference proteome</keyword>
<keyword id="KW-0832">Ubl conjugation</keyword>
<sequence>MATIKSELIKNFAEEEAIHHNKISIVGTGSVGVACAISILLKGLSDELVLVDVDEGKLKGETMDLQHGSPFMKMPNIVSSKDYLVTANSNLVIITAGARQKKGETRLDLVQRNVSIFKLMIPNITQYSPHCKLLIVTNPVDILTYVAWKLSGFPKNRVIGSGCNLDSARFRYFIGQRLGIHSESCHGLILGEHGDSSVPVWSGVNIAGVPLKDLNPDIGTDKDPEQWENVHKKVISSGYEMVKMKGYTSWGISLSVADLTESILKNLRRVHPVSTLSKGLYGINEDIFLSVPCILGENGITDLIKVKLTLEEEACLQKSAETLWEIQKELKL</sequence>
<protein>
    <recommendedName>
        <fullName>L-lactate dehydrogenase A-like 6A</fullName>
        <shortName>LDHA-like protein 6A</shortName>
        <ecNumber evidence="5">1.1.1.27</ecNumber>
    </recommendedName>
</protein>